<sequence>MDFMKPETVLDLGNIRDALVRMEDTIIFNFIERSQFYASPSVYKVNQFPIPNFDGSFLDWLLSQHERIHSQVRRYDAPDEVPFFPNVLEKTFLPKINYPSVLASYADEINVNKEILKIYTSEIVPGIAAGSGEQEDNLGSCAMADIECLQSLSRRIHFGRFVAEAKFISEGDKIVDLIKKRDVEGIEALITNAEVEKRILDRLLEKGRAYGTDPTLKFTQHIQSKVKPEVIVKIYKDFVIPLTKKVEVDYLLRRLEDEEDDDATQKSGGYVDRFLSSGLY</sequence>
<accession>Q9P4D8</accession>
<organism evidence="7">
    <name type="scientific">Pichia angusta</name>
    <name type="common">Yeast</name>
    <name type="synonym">Hansenula polymorpha</name>
    <dbReference type="NCBI Taxonomy" id="870730"/>
    <lineage>
        <taxon>Eukaryota</taxon>
        <taxon>Fungi</taxon>
        <taxon>Dikarya</taxon>
        <taxon>Ascomycota</taxon>
        <taxon>Saccharomycotina</taxon>
        <taxon>Pichiomycetes</taxon>
        <taxon>Pichiales</taxon>
        <taxon>Pichiaceae</taxon>
        <taxon>Ogataea</taxon>
    </lineage>
</organism>
<protein>
    <recommendedName>
        <fullName evidence="4">Chorismate mutase</fullName>
        <shortName evidence="5">CM</shortName>
        <ecNumber evidence="3">5.4.99.5</ecNumber>
    </recommendedName>
</protein>
<keyword id="KW-0021">Allosteric enzyme</keyword>
<keyword id="KW-0028">Amino-acid biosynthesis</keyword>
<keyword id="KW-0057">Aromatic amino acid biosynthesis</keyword>
<keyword id="KW-0963">Cytoplasm</keyword>
<keyword id="KW-0413">Isomerase</keyword>
<keyword id="KW-0584">Phenylalanine biosynthesis</keyword>
<keyword id="KW-0827">Tyrosine biosynthesis</keyword>
<comment type="function">
    <text evidence="3">Catalyzes the Claisen rearrangement of chorismate to prephenate (PubMed:10894726). Acts at the first branch point in the aromatic amino acid pathway where it steers biosynthesis towards phenylalanine and tyrosine, and away from tryptophan (PubMed:10894726).</text>
</comment>
<comment type="catalytic activity">
    <reaction evidence="3">
        <text>chorismate = prephenate</text>
        <dbReference type="Rhea" id="RHEA:13897"/>
        <dbReference type="ChEBI" id="CHEBI:29748"/>
        <dbReference type="ChEBI" id="CHEBI:29934"/>
        <dbReference type="EC" id="5.4.99.5"/>
    </reaction>
    <physiologicalReaction direction="left-to-right" evidence="3">
        <dbReference type="Rhea" id="RHEA:13898"/>
    </physiologicalReaction>
</comment>
<comment type="activity regulation">
    <text evidence="1 3">Each dimer has two allosteric binding sites that can bind the regulatory effectors tryptophan or tyrosine (PubMed:10894726). Can bind either one tryptophan or one tyrosine, two tryptophan or two tyrosine or one tryptophan and one tyrosine, which differentially affect the catalytic activity (By similarity). Activated by tryptophan and subject to feedback inhibition by tyrosine (PubMed:10894726). In the presence of both tryptophan and tyrosine, the enzyme is in the activated state (By similarity).</text>
</comment>
<comment type="biophysicochemical properties">
    <kinetics>
        <KM evidence="3">1.6 mM for chorismate (in the presence of 10 uM tryptophan and at 37 degrees Celsius)</KM>
        <text evidence="3">kcat is 303.8 sec(-1) with chorismate as substrate (in the presence of 10 uM tryptophan and at 37 degrees Celsius). kcat is 89.3 sec(-1) with chorismate as substrate (in the presence of 100 uM tyrosine and at 37 degrees Celsius).</text>
    </kinetics>
    <temperatureDependence>
        <text evidence="3">Optimum temperature is 48 degrees Celsius.</text>
    </temperatureDependence>
</comment>
<comment type="pathway">
    <text evidence="6">Metabolic intermediate biosynthesis; prephenate biosynthesis; prephenate from chorismate: step 1/1.</text>
</comment>
<comment type="subunit">
    <text evidence="3">Homodimer.</text>
</comment>
<comment type="subcellular location">
    <subcellularLocation>
        <location evidence="1">Cytoplasm</location>
    </subcellularLocation>
</comment>
<comment type="induction">
    <text evidence="3">Induced by growth on methanol carbon source (PubMed:10894726). Slightly induced by growth on the non-fermentable carbon source glycerol (PubMed:10894726). Not induced by histidine starvation (PubMed:10894726).</text>
</comment>
<feature type="chain" id="PRO_0000452013" description="Chorismate mutase">
    <location>
        <begin position="1"/>
        <end position="280"/>
    </location>
</feature>
<feature type="domain" description="Chorismate mutase" evidence="2">
    <location>
        <begin position="3"/>
        <end position="256"/>
    </location>
</feature>
<feature type="binding site" evidence="1">
    <location>
        <position position="73"/>
    </location>
    <ligand>
        <name>L-tyrosine</name>
        <dbReference type="ChEBI" id="CHEBI:58315"/>
        <note>allosteric effector</note>
    </ligand>
</feature>
<feature type="binding site" evidence="1">
    <location>
        <position position="74"/>
    </location>
    <ligand>
        <name>L-tyrosine</name>
        <dbReference type="ChEBI" id="CHEBI:58315"/>
        <note>allosteric effector</note>
    </ligand>
</feature>
<feature type="binding site" evidence="1">
    <location>
        <position position="137"/>
    </location>
    <ligand>
        <name>L-tryptophan</name>
        <dbReference type="ChEBI" id="CHEBI:57912"/>
        <note>allosteric effector</note>
    </ligand>
</feature>
<feature type="binding site" evidence="1">
    <location>
        <position position="137"/>
    </location>
    <ligand>
        <name>L-tyrosine</name>
        <dbReference type="ChEBI" id="CHEBI:58315"/>
        <note>allosteric effector</note>
    </ligand>
</feature>
<feature type="binding site" evidence="1">
    <location>
        <position position="139"/>
    </location>
    <ligand>
        <name>L-tryptophan</name>
        <dbReference type="ChEBI" id="CHEBI:57912"/>
        <note>allosteric effector</note>
    </ligand>
</feature>
<feature type="binding site" evidence="1">
    <location>
        <position position="139"/>
    </location>
    <ligand>
        <name>L-tyrosine</name>
        <dbReference type="ChEBI" id="CHEBI:58315"/>
        <note>allosteric effector</note>
    </ligand>
</feature>
<feature type="binding site" evidence="1">
    <location>
        <position position="140"/>
    </location>
    <ligand>
        <name>L-tryptophan</name>
        <dbReference type="ChEBI" id="CHEBI:57912"/>
        <note>allosteric effector</note>
    </ligand>
</feature>
<feature type="binding site" evidence="1">
    <location>
        <position position="140"/>
    </location>
    <ligand>
        <name>L-tyrosine</name>
        <dbReference type="ChEBI" id="CHEBI:58315"/>
        <note>allosteric effector</note>
    </ligand>
</feature>
<evidence type="ECO:0000250" key="1">
    <source>
        <dbReference type="UniProtKB" id="P32178"/>
    </source>
</evidence>
<evidence type="ECO:0000255" key="2">
    <source>
        <dbReference type="PROSITE-ProRule" id="PRU00516"/>
    </source>
</evidence>
<evidence type="ECO:0000269" key="3">
    <source>
    </source>
</evidence>
<evidence type="ECO:0000303" key="4">
    <source>
    </source>
</evidence>
<evidence type="ECO:0000305" key="5"/>
<evidence type="ECO:0000305" key="6">
    <source>
    </source>
</evidence>
<evidence type="ECO:0000312" key="7">
    <source>
        <dbReference type="EMBL" id="AAF87954.1"/>
    </source>
</evidence>
<name>CHMU_PICAN</name>
<proteinExistence type="evidence at protein level"/>
<gene>
    <name evidence="5" type="primary">ARO7</name>
    <name evidence="4" type="synonym">HARO7</name>
</gene>
<reference evidence="7" key="1">
    <citation type="journal article" date="2000" name="J. Bacteriol.">
        <title>HARO7 encodes chorismate mutase of the methylotrophic yeast Hansenula polymorpha and is derepressed upon methanol utilization.</title>
        <authorList>
            <person name="Krappmann S."/>
            <person name="Pries R."/>
            <person name="Gellissen G."/>
            <person name="Hiller M."/>
            <person name="Braus G.H."/>
        </authorList>
    </citation>
    <scope>NUCLEOTIDE SEQUENCE [GENOMIC DNA]</scope>
    <scope>FUNCTION</scope>
    <scope>CATALYTIC ACTIVITY</scope>
    <scope>ACTIVITY REGULATION</scope>
    <scope>BIOPHYSICOCHEMICAL PROPERTIES</scope>
    <scope>PATHWAY</scope>
    <scope>SUBUNIT</scope>
    <scope>INDUCTION</scope>
    <source>
        <strain evidence="4">RB11</strain>
    </source>
</reference>
<dbReference type="EC" id="5.4.99.5" evidence="3"/>
<dbReference type="EMBL" id="AF204738">
    <property type="protein sequence ID" value="AAF87954.1"/>
    <property type="molecule type" value="Genomic_DNA"/>
</dbReference>
<dbReference type="SMR" id="Q9P4D8"/>
<dbReference type="PhylomeDB" id="Q9P4D8"/>
<dbReference type="BRENDA" id="5.4.99.5">
    <property type="organism ID" value="2587"/>
</dbReference>
<dbReference type="UniPathway" id="UPA00120">
    <property type="reaction ID" value="UER00203"/>
</dbReference>
<dbReference type="GO" id="GO:0005737">
    <property type="term" value="C:cytoplasm"/>
    <property type="evidence" value="ECO:0000305"/>
    <property type="project" value="UniProtKB"/>
</dbReference>
<dbReference type="GO" id="GO:0004106">
    <property type="term" value="F:chorismate mutase activity"/>
    <property type="evidence" value="ECO:0000314"/>
    <property type="project" value="UniProtKB"/>
</dbReference>
<dbReference type="GO" id="GO:0046417">
    <property type="term" value="P:chorismate metabolic process"/>
    <property type="evidence" value="ECO:0000314"/>
    <property type="project" value="UniProtKB"/>
</dbReference>
<dbReference type="GO" id="GO:0009094">
    <property type="term" value="P:L-phenylalanine biosynthetic process"/>
    <property type="evidence" value="ECO:0000315"/>
    <property type="project" value="UniProtKB"/>
</dbReference>
<dbReference type="GO" id="GO:0006571">
    <property type="term" value="P:tyrosine biosynthetic process"/>
    <property type="evidence" value="ECO:0000315"/>
    <property type="project" value="UniProtKB"/>
</dbReference>
<dbReference type="FunFam" id="1.10.590.10:FF:000002">
    <property type="entry name" value="Chorismate mutase"/>
    <property type="match status" value="1"/>
</dbReference>
<dbReference type="Gene3D" id="1.10.590.10">
    <property type="entry name" value="Chorismate mutase, AroQ class superfamily, eukaryotic"/>
    <property type="match status" value="1"/>
</dbReference>
<dbReference type="InterPro" id="IPR036263">
    <property type="entry name" value="Chorismate_II_sf"/>
</dbReference>
<dbReference type="InterPro" id="IPR008238">
    <property type="entry name" value="Chorismate_mutase_AroQ_euk"/>
</dbReference>
<dbReference type="InterPro" id="IPR037039">
    <property type="entry name" value="CM_AroQ_sf_eucaryotic"/>
</dbReference>
<dbReference type="InterPro" id="IPR002701">
    <property type="entry name" value="CM_II_prokaryot"/>
</dbReference>
<dbReference type="NCBIfam" id="TIGR01802">
    <property type="entry name" value="CM_pl-yst"/>
    <property type="match status" value="1"/>
</dbReference>
<dbReference type="PANTHER" id="PTHR21145">
    <property type="entry name" value="CHORISMATE MUTASE"/>
    <property type="match status" value="1"/>
</dbReference>
<dbReference type="PANTHER" id="PTHR21145:SF12">
    <property type="entry name" value="CHORISMATE MUTASE"/>
    <property type="match status" value="1"/>
</dbReference>
<dbReference type="Pfam" id="PF01817">
    <property type="entry name" value="CM_2"/>
    <property type="match status" value="1"/>
</dbReference>
<dbReference type="PIRSF" id="PIRSF017318">
    <property type="entry name" value="Chor_mut_AroQ_eu"/>
    <property type="match status" value="1"/>
</dbReference>
<dbReference type="SUPFAM" id="SSF48600">
    <property type="entry name" value="Chorismate mutase II"/>
    <property type="match status" value="1"/>
</dbReference>
<dbReference type="PROSITE" id="PS51169">
    <property type="entry name" value="CHORISMATE_MUT_3"/>
    <property type="match status" value="1"/>
</dbReference>